<feature type="chain" id="PRO_0000344031" description="Guanine nucleotide exchange factor BopE">
    <location>
        <begin position="1"/>
        <end position="261"/>
    </location>
</feature>
<gene>
    <name type="primary">bopE</name>
    <name type="ordered locus">BURPS1106A_A2067</name>
</gene>
<protein>
    <recommendedName>
        <fullName>Guanine nucleotide exchange factor BopE</fullName>
    </recommendedName>
    <alternativeName>
        <fullName>Effector protein BopE</fullName>
    </alternativeName>
</protein>
<evidence type="ECO:0000250" key="1"/>
<evidence type="ECO:0000305" key="2"/>
<reference key="1">
    <citation type="journal article" date="2010" name="Genome Biol. Evol.">
        <title>Continuing evolution of Burkholderia mallei through genome reduction and large-scale rearrangements.</title>
        <authorList>
            <person name="Losada L."/>
            <person name="Ronning C.M."/>
            <person name="DeShazer D."/>
            <person name="Woods D."/>
            <person name="Fedorova N."/>
            <person name="Kim H.S."/>
            <person name="Shabalina S.A."/>
            <person name="Pearson T.R."/>
            <person name="Brinkac L."/>
            <person name="Tan P."/>
            <person name="Nandi T."/>
            <person name="Crabtree J."/>
            <person name="Badger J."/>
            <person name="Beckstrom-Sternberg S."/>
            <person name="Saqib M."/>
            <person name="Schutzer S.E."/>
            <person name="Keim P."/>
            <person name="Nierman W.C."/>
        </authorList>
    </citation>
    <scope>NUCLEOTIDE SEQUENCE [LARGE SCALE GENOMIC DNA]</scope>
    <source>
        <strain>1106a</strain>
    </source>
</reference>
<sequence>MTYNPRIGGFTHVKQASFDVHVKRGEAQPRTSFAQQIKRIFSKIGETLGQLFRHRAPDSAPGRVRLQGVRYVGSYRPTGDAKQAIRHFVDEAVKQVAHTRTPEIRQDAEFGRQVYEATLCAIFSEAKDRFCMDPATRAGNVRPAFIEALGDAARATGLPGADKQGVFTPSGAGTNPLYTEIRLRADTLMGAELAARPEYRELQPYARQQAIDLVANALPAERSNTLVEFRQTVQTLEATYRRAAQDASRDEKGATNAADGA</sequence>
<keyword id="KW-0343">GTPase activation</keyword>
<keyword id="KW-0344">Guanine-nucleotide releasing factor</keyword>
<keyword id="KW-0964">Secreted</keyword>
<keyword id="KW-0843">Virulence</keyword>
<accession>A3P6Z0</accession>
<proteinExistence type="inferred from homology"/>
<comment type="function">
    <text evidence="1">Activator for both CDC42 and RAC1 by directly interacting with these Rho GTPases and acting as a guanine nucleotide exchange factor (GEF). This activation results in actin cytoskeleton rearrangements and stimulates membrane ruffling, thus promoting bacterial entry into non-phagocytic cells (By similarity).</text>
</comment>
<comment type="subunit">
    <text evidence="1">Monomer. Interacts with human CDC42 (By similarity).</text>
</comment>
<comment type="subcellular location">
    <subcellularLocation>
        <location evidence="1">Secreted</location>
    </subcellularLocation>
    <text evidence="1">Secreted via the bsa type III secretion system.</text>
</comment>
<comment type="similarity">
    <text evidence="2">Belongs to the GEF (guanine exchange factor) SopE family.</text>
</comment>
<name>BOPE_BURP0</name>
<organism>
    <name type="scientific">Burkholderia pseudomallei (strain 1106a)</name>
    <dbReference type="NCBI Taxonomy" id="357348"/>
    <lineage>
        <taxon>Bacteria</taxon>
        <taxon>Pseudomonadati</taxon>
        <taxon>Pseudomonadota</taxon>
        <taxon>Betaproteobacteria</taxon>
        <taxon>Burkholderiales</taxon>
        <taxon>Burkholderiaceae</taxon>
        <taxon>Burkholderia</taxon>
        <taxon>pseudomallei group</taxon>
    </lineage>
</organism>
<dbReference type="EMBL" id="CP000573">
    <property type="protein sequence ID" value="ABN95087.1"/>
    <property type="molecule type" value="Genomic_DNA"/>
</dbReference>
<dbReference type="RefSeq" id="WP_004188462.1">
    <property type="nucleotide sequence ID" value="NC_009078.1"/>
</dbReference>
<dbReference type="BMRB" id="A3P6Z0"/>
<dbReference type="SMR" id="A3P6Z0"/>
<dbReference type="GeneID" id="93063705"/>
<dbReference type="KEGG" id="bpl:BURPS1106A_A2067"/>
<dbReference type="HOGENOM" id="CLU_1064256_0_0_4"/>
<dbReference type="Proteomes" id="UP000006738">
    <property type="component" value="Chromosome II"/>
</dbReference>
<dbReference type="GO" id="GO:0005576">
    <property type="term" value="C:extracellular region"/>
    <property type="evidence" value="ECO:0007669"/>
    <property type="project" value="UniProtKB-SubCell"/>
</dbReference>
<dbReference type="GO" id="GO:0005096">
    <property type="term" value="F:GTPase activator activity"/>
    <property type="evidence" value="ECO:0007669"/>
    <property type="project" value="UniProtKB-KW"/>
</dbReference>
<dbReference type="GO" id="GO:0005085">
    <property type="term" value="F:guanyl-nucleotide exchange factor activity"/>
    <property type="evidence" value="ECO:0007669"/>
    <property type="project" value="UniProtKB-KW"/>
</dbReference>
<dbReference type="GO" id="GO:0030036">
    <property type="term" value="P:actin cytoskeleton organization"/>
    <property type="evidence" value="ECO:0007669"/>
    <property type="project" value="InterPro"/>
</dbReference>
<dbReference type="Gene3D" id="1.10.4120.10">
    <property type="entry name" value="SopE-like, GEF domain"/>
    <property type="match status" value="1"/>
</dbReference>
<dbReference type="InterPro" id="IPR005414">
    <property type="entry name" value="SopE"/>
</dbReference>
<dbReference type="InterPro" id="IPR035949">
    <property type="entry name" value="SopE-like_GEF_dom_sf"/>
</dbReference>
<dbReference type="InterPro" id="IPR016019">
    <property type="entry name" value="SopE_GEF_dom"/>
</dbReference>
<dbReference type="NCBIfam" id="NF011808">
    <property type="entry name" value="PRK15278.1"/>
    <property type="match status" value="1"/>
</dbReference>
<dbReference type="Pfam" id="PF07487">
    <property type="entry name" value="SopE_GEF"/>
    <property type="match status" value="1"/>
</dbReference>
<dbReference type="PIRSF" id="PIRSF034781">
    <property type="entry name" value="SecIII_sopE"/>
    <property type="match status" value="1"/>
</dbReference>
<dbReference type="PRINTS" id="PR01593">
    <property type="entry name" value="SOPEPROTEIN"/>
</dbReference>
<dbReference type="SUPFAM" id="SSF81832">
    <property type="entry name" value="SopE-like GEF domain"/>
    <property type="match status" value="1"/>
</dbReference>